<organism>
    <name type="scientific">Rickettsia typhi (strain ATCC VR-144 / Wilmington)</name>
    <dbReference type="NCBI Taxonomy" id="257363"/>
    <lineage>
        <taxon>Bacteria</taxon>
        <taxon>Pseudomonadati</taxon>
        <taxon>Pseudomonadota</taxon>
        <taxon>Alphaproteobacteria</taxon>
        <taxon>Rickettsiales</taxon>
        <taxon>Rickettsiaceae</taxon>
        <taxon>Rickettsieae</taxon>
        <taxon>Rickettsia</taxon>
        <taxon>typhus group</taxon>
    </lineage>
</organism>
<gene>
    <name evidence="1" type="primary">dapD</name>
    <name type="ordered locus">RT0183</name>
</gene>
<accession>Q68XH5</accession>
<dbReference type="EC" id="2.3.1.117" evidence="1"/>
<dbReference type="EMBL" id="AE017197">
    <property type="protein sequence ID" value="AAU03667.1"/>
    <property type="molecule type" value="Genomic_DNA"/>
</dbReference>
<dbReference type="RefSeq" id="WP_011190654.1">
    <property type="nucleotide sequence ID" value="NC_006142.1"/>
</dbReference>
<dbReference type="SMR" id="Q68XH5"/>
<dbReference type="KEGG" id="rty:RT0183"/>
<dbReference type="eggNOG" id="COG2171">
    <property type="taxonomic scope" value="Bacteria"/>
</dbReference>
<dbReference type="HOGENOM" id="CLU_050859_0_1_5"/>
<dbReference type="OrthoDB" id="9775362at2"/>
<dbReference type="UniPathway" id="UPA00034">
    <property type="reaction ID" value="UER00019"/>
</dbReference>
<dbReference type="Proteomes" id="UP000000604">
    <property type="component" value="Chromosome"/>
</dbReference>
<dbReference type="GO" id="GO:0005737">
    <property type="term" value="C:cytoplasm"/>
    <property type="evidence" value="ECO:0007669"/>
    <property type="project" value="UniProtKB-SubCell"/>
</dbReference>
<dbReference type="GO" id="GO:0008666">
    <property type="term" value="F:2,3,4,5-tetrahydropyridine-2,6-dicarboxylate N-succinyltransferase activity"/>
    <property type="evidence" value="ECO:0007669"/>
    <property type="project" value="UniProtKB-UniRule"/>
</dbReference>
<dbReference type="GO" id="GO:0019877">
    <property type="term" value="P:diaminopimelate biosynthetic process"/>
    <property type="evidence" value="ECO:0007669"/>
    <property type="project" value="UniProtKB-UniRule"/>
</dbReference>
<dbReference type="GO" id="GO:0009089">
    <property type="term" value="P:lysine biosynthetic process via diaminopimelate"/>
    <property type="evidence" value="ECO:0007669"/>
    <property type="project" value="UniProtKB-UniRule"/>
</dbReference>
<dbReference type="CDD" id="cd03350">
    <property type="entry name" value="LbH_THP_succinylT"/>
    <property type="match status" value="1"/>
</dbReference>
<dbReference type="Gene3D" id="2.160.10.10">
    <property type="entry name" value="Hexapeptide repeat proteins"/>
    <property type="match status" value="1"/>
</dbReference>
<dbReference type="Gene3D" id="1.10.166.10">
    <property type="entry name" value="Tetrahydrodipicolinate-N-succinyltransferase, N-terminal domain"/>
    <property type="match status" value="1"/>
</dbReference>
<dbReference type="HAMAP" id="MF_00811">
    <property type="entry name" value="DapD"/>
    <property type="match status" value="1"/>
</dbReference>
<dbReference type="InterPro" id="IPR005664">
    <property type="entry name" value="DapD_Trfase_Hexpep_rpt_fam"/>
</dbReference>
<dbReference type="InterPro" id="IPR001451">
    <property type="entry name" value="Hexapep"/>
</dbReference>
<dbReference type="InterPro" id="IPR023180">
    <property type="entry name" value="THP_succinylTrfase_dom1"/>
</dbReference>
<dbReference type="InterPro" id="IPR037133">
    <property type="entry name" value="THP_succinylTrfase_N_sf"/>
</dbReference>
<dbReference type="InterPro" id="IPR050179">
    <property type="entry name" value="Trans_hexapeptide_repeat"/>
</dbReference>
<dbReference type="InterPro" id="IPR011004">
    <property type="entry name" value="Trimer_LpxA-like_sf"/>
</dbReference>
<dbReference type="NCBIfam" id="TIGR00965">
    <property type="entry name" value="dapD"/>
    <property type="match status" value="1"/>
</dbReference>
<dbReference type="NCBIfam" id="NF008808">
    <property type="entry name" value="PRK11830.1"/>
    <property type="match status" value="1"/>
</dbReference>
<dbReference type="PANTHER" id="PTHR43300:SF10">
    <property type="entry name" value="2,3,4,5-TETRAHYDROPYRIDINE-2,6-DICARBOXYLATE N-ACETYLTRANSFERASE"/>
    <property type="match status" value="1"/>
</dbReference>
<dbReference type="PANTHER" id="PTHR43300">
    <property type="entry name" value="ACETYLTRANSFERASE"/>
    <property type="match status" value="1"/>
</dbReference>
<dbReference type="Pfam" id="PF00132">
    <property type="entry name" value="Hexapep"/>
    <property type="match status" value="1"/>
</dbReference>
<dbReference type="Pfam" id="PF14602">
    <property type="entry name" value="Hexapep_2"/>
    <property type="match status" value="1"/>
</dbReference>
<dbReference type="Pfam" id="PF14805">
    <property type="entry name" value="THDPS_N_2"/>
    <property type="match status" value="1"/>
</dbReference>
<dbReference type="SUPFAM" id="SSF51161">
    <property type="entry name" value="Trimeric LpxA-like enzymes"/>
    <property type="match status" value="1"/>
</dbReference>
<comment type="catalytic activity">
    <reaction evidence="1">
        <text>(S)-2,3,4,5-tetrahydrodipicolinate + succinyl-CoA + H2O = (S)-2-succinylamino-6-oxoheptanedioate + CoA</text>
        <dbReference type="Rhea" id="RHEA:17325"/>
        <dbReference type="ChEBI" id="CHEBI:15377"/>
        <dbReference type="ChEBI" id="CHEBI:15685"/>
        <dbReference type="ChEBI" id="CHEBI:16845"/>
        <dbReference type="ChEBI" id="CHEBI:57287"/>
        <dbReference type="ChEBI" id="CHEBI:57292"/>
        <dbReference type="EC" id="2.3.1.117"/>
    </reaction>
</comment>
<comment type="pathway">
    <text evidence="1">Amino-acid biosynthesis; L-lysine biosynthesis via DAP pathway; LL-2,6-diaminopimelate from (S)-tetrahydrodipicolinate (succinylase route): step 1/3.</text>
</comment>
<comment type="subunit">
    <text evidence="1">Homotrimer.</text>
</comment>
<comment type="subcellular location">
    <subcellularLocation>
        <location evidence="1">Cytoplasm</location>
    </subcellularLocation>
</comment>
<comment type="similarity">
    <text evidence="1">Belongs to the transferase hexapeptide repeat family.</text>
</comment>
<proteinExistence type="inferred from homology"/>
<feature type="chain" id="PRO_0000196965" description="2,3,4,5-tetrahydropyridine-2,6-dicarboxylate N-succinyltransferase">
    <location>
        <begin position="1"/>
        <end position="274"/>
    </location>
</feature>
<feature type="binding site" evidence="1">
    <location>
        <position position="106"/>
    </location>
    <ligand>
        <name>substrate</name>
    </ligand>
</feature>
<feature type="binding site" evidence="1">
    <location>
        <position position="143"/>
    </location>
    <ligand>
        <name>substrate</name>
    </ligand>
</feature>
<keyword id="KW-0012">Acyltransferase</keyword>
<keyword id="KW-0028">Amino-acid biosynthesis</keyword>
<keyword id="KW-0963">Cytoplasm</keyword>
<keyword id="KW-0220">Diaminopimelate biosynthesis</keyword>
<keyword id="KW-0457">Lysine biosynthesis</keyword>
<keyword id="KW-0677">Repeat</keyword>
<keyword id="KW-0808">Transferase</keyword>
<name>DAPD_RICTY</name>
<sequence>MSDIIKEIEEAWQIKENILNDSLKLIKLKSILNESIKSLNQGIIRVCEKQGNQWKVNEWVKKAILLYFITTESQLYNNNYNSWYDKVAPKFPADTDKNIFKEAAIRKVPGAIVRTGTYIAKNVVIMPSFINIGAYIDEGTMIDTWATIGSCAQIGKNCHISGGSGIGGVLEPLQAKPVIIEDNCFVGARSEIAEGIIVEEGSVISMGVFIGSSTKIVYRDTGKIIYGRIPAYSVVVPGVLPSPEAGKPGLYCVVIVKQVDKTTRAKVSINDLLR</sequence>
<reference key="1">
    <citation type="journal article" date="2004" name="J. Bacteriol.">
        <title>Complete genome sequence of Rickettsia typhi and comparison with sequences of other Rickettsiae.</title>
        <authorList>
            <person name="McLeod M.P."/>
            <person name="Qin X."/>
            <person name="Karpathy S.E."/>
            <person name="Gioia J."/>
            <person name="Highlander S.K."/>
            <person name="Fox G.E."/>
            <person name="McNeill T.Z."/>
            <person name="Jiang H."/>
            <person name="Muzny D."/>
            <person name="Jacob L.S."/>
            <person name="Hawes A.C."/>
            <person name="Sodergren E."/>
            <person name="Gill R."/>
            <person name="Hume J."/>
            <person name="Morgan M."/>
            <person name="Fan G."/>
            <person name="Amin A.G."/>
            <person name="Gibbs R.A."/>
            <person name="Hong C."/>
            <person name="Yu X.-J."/>
            <person name="Walker D.H."/>
            <person name="Weinstock G.M."/>
        </authorList>
    </citation>
    <scope>NUCLEOTIDE SEQUENCE [LARGE SCALE GENOMIC DNA]</scope>
    <source>
        <strain>ATCC VR-144 / Wilmington</strain>
    </source>
</reference>
<protein>
    <recommendedName>
        <fullName evidence="1">2,3,4,5-tetrahydropyridine-2,6-dicarboxylate N-succinyltransferase</fullName>
        <ecNumber evidence="1">2.3.1.117</ecNumber>
    </recommendedName>
    <alternativeName>
        <fullName evidence="1">Tetrahydrodipicolinate N-succinyltransferase</fullName>
        <shortName evidence="1">THDP succinyltransferase</shortName>
        <shortName evidence="1">THP succinyltransferase</shortName>
        <shortName evidence="1">Tetrahydropicolinate succinylase</shortName>
    </alternativeName>
</protein>
<evidence type="ECO:0000255" key="1">
    <source>
        <dbReference type="HAMAP-Rule" id="MF_00811"/>
    </source>
</evidence>